<gene>
    <name evidence="1" type="primary">hslV</name>
    <name type="ordered locus">lwe1295</name>
</gene>
<organism>
    <name type="scientific">Listeria welshimeri serovar 6b (strain ATCC 35897 / DSM 20650 / CCUG 15529 / CIP 8149 / NCTC 11857 / SLCC 5334 / V8)</name>
    <dbReference type="NCBI Taxonomy" id="386043"/>
    <lineage>
        <taxon>Bacteria</taxon>
        <taxon>Bacillati</taxon>
        <taxon>Bacillota</taxon>
        <taxon>Bacilli</taxon>
        <taxon>Bacillales</taxon>
        <taxon>Listeriaceae</taxon>
        <taxon>Listeria</taxon>
    </lineage>
</organism>
<dbReference type="EC" id="3.4.25.2" evidence="1"/>
<dbReference type="EMBL" id="AM263198">
    <property type="protein sequence ID" value="CAK20713.1"/>
    <property type="molecule type" value="Genomic_DNA"/>
</dbReference>
<dbReference type="RefSeq" id="WP_003724001.1">
    <property type="nucleotide sequence ID" value="NC_008555.1"/>
</dbReference>
<dbReference type="SMR" id="A0AI81"/>
<dbReference type="STRING" id="386043.lwe1295"/>
<dbReference type="MEROPS" id="T01.007"/>
<dbReference type="GeneID" id="93239152"/>
<dbReference type="KEGG" id="lwe:lwe1295"/>
<dbReference type="eggNOG" id="COG5405">
    <property type="taxonomic scope" value="Bacteria"/>
</dbReference>
<dbReference type="HOGENOM" id="CLU_093872_1_1_9"/>
<dbReference type="OrthoDB" id="9804884at2"/>
<dbReference type="Proteomes" id="UP000000779">
    <property type="component" value="Chromosome"/>
</dbReference>
<dbReference type="GO" id="GO:0009376">
    <property type="term" value="C:HslUV protease complex"/>
    <property type="evidence" value="ECO:0007669"/>
    <property type="project" value="UniProtKB-UniRule"/>
</dbReference>
<dbReference type="GO" id="GO:0005839">
    <property type="term" value="C:proteasome core complex"/>
    <property type="evidence" value="ECO:0007669"/>
    <property type="project" value="InterPro"/>
</dbReference>
<dbReference type="GO" id="GO:0046872">
    <property type="term" value="F:metal ion binding"/>
    <property type="evidence" value="ECO:0007669"/>
    <property type="project" value="UniProtKB-KW"/>
</dbReference>
<dbReference type="GO" id="GO:0004298">
    <property type="term" value="F:threonine-type endopeptidase activity"/>
    <property type="evidence" value="ECO:0007669"/>
    <property type="project" value="UniProtKB-KW"/>
</dbReference>
<dbReference type="GO" id="GO:0051603">
    <property type="term" value="P:proteolysis involved in protein catabolic process"/>
    <property type="evidence" value="ECO:0007669"/>
    <property type="project" value="InterPro"/>
</dbReference>
<dbReference type="CDD" id="cd01913">
    <property type="entry name" value="protease_HslV"/>
    <property type="match status" value="1"/>
</dbReference>
<dbReference type="FunFam" id="3.60.20.10:FF:000002">
    <property type="entry name" value="ATP-dependent protease subunit HslV"/>
    <property type="match status" value="1"/>
</dbReference>
<dbReference type="Gene3D" id="3.60.20.10">
    <property type="entry name" value="Glutamine Phosphoribosylpyrophosphate, subunit 1, domain 1"/>
    <property type="match status" value="1"/>
</dbReference>
<dbReference type="HAMAP" id="MF_00248">
    <property type="entry name" value="HslV"/>
    <property type="match status" value="1"/>
</dbReference>
<dbReference type="InterPro" id="IPR022281">
    <property type="entry name" value="ATP-dep_Prtase_HsIV_su"/>
</dbReference>
<dbReference type="InterPro" id="IPR029055">
    <property type="entry name" value="Ntn_hydrolases_N"/>
</dbReference>
<dbReference type="InterPro" id="IPR001353">
    <property type="entry name" value="Proteasome_sua/b"/>
</dbReference>
<dbReference type="InterPro" id="IPR023333">
    <property type="entry name" value="Proteasome_suB-type"/>
</dbReference>
<dbReference type="NCBIfam" id="TIGR03692">
    <property type="entry name" value="ATP_dep_HslV"/>
    <property type="match status" value="1"/>
</dbReference>
<dbReference type="NCBIfam" id="NF003964">
    <property type="entry name" value="PRK05456.1"/>
    <property type="match status" value="1"/>
</dbReference>
<dbReference type="PANTHER" id="PTHR32194:SF0">
    <property type="entry name" value="ATP-DEPENDENT PROTEASE SUBUNIT HSLV"/>
    <property type="match status" value="1"/>
</dbReference>
<dbReference type="PANTHER" id="PTHR32194">
    <property type="entry name" value="METALLOPROTEASE TLDD"/>
    <property type="match status" value="1"/>
</dbReference>
<dbReference type="Pfam" id="PF00227">
    <property type="entry name" value="Proteasome"/>
    <property type="match status" value="1"/>
</dbReference>
<dbReference type="PIRSF" id="PIRSF039093">
    <property type="entry name" value="HslV"/>
    <property type="match status" value="1"/>
</dbReference>
<dbReference type="SUPFAM" id="SSF56235">
    <property type="entry name" value="N-terminal nucleophile aminohydrolases (Ntn hydrolases)"/>
    <property type="match status" value="1"/>
</dbReference>
<dbReference type="PROSITE" id="PS51476">
    <property type="entry name" value="PROTEASOME_BETA_2"/>
    <property type="match status" value="1"/>
</dbReference>
<protein>
    <recommendedName>
        <fullName evidence="1">ATP-dependent protease subunit HslV</fullName>
        <ecNumber evidence="1">3.4.25.2</ecNumber>
    </recommendedName>
</protein>
<evidence type="ECO:0000255" key="1">
    <source>
        <dbReference type="HAMAP-Rule" id="MF_00248"/>
    </source>
</evidence>
<keyword id="KW-0021">Allosteric enzyme</keyword>
<keyword id="KW-0963">Cytoplasm</keyword>
<keyword id="KW-0378">Hydrolase</keyword>
<keyword id="KW-0479">Metal-binding</keyword>
<keyword id="KW-0645">Protease</keyword>
<keyword id="KW-0915">Sodium</keyword>
<keyword id="KW-0888">Threonine protease</keyword>
<name>HSLV_LISW6</name>
<accession>A0AI81</accession>
<proteinExistence type="inferred from homology"/>
<comment type="function">
    <text evidence="1">Protease subunit of a proteasome-like degradation complex believed to be a general protein degrading machinery.</text>
</comment>
<comment type="catalytic activity">
    <reaction evidence="1">
        <text>ATP-dependent cleavage of peptide bonds with broad specificity.</text>
        <dbReference type="EC" id="3.4.25.2"/>
    </reaction>
</comment>
<comment type="activity regulation">
    <text evidence="1">Allosterically activated by HslU binding.</text>
</comment>
<comment type="subunit">
    <text evidence="1">A double ring-shaped homohexamer of HslV is capped on each side by a ring-shaped HslU homohexamer. The assembly of the HslU/HslV complex is dependent on binding of ATP.</text>
</comment>
<comment type="subcellular location">
    <subcellularLocation>
        <location evidence="1">Cytoplasm</location>
    </subcellularLocation>
</comment>
<comment type="similarity">
    <text evidence="1">Belongs to the peptidase T1B family. HslV subfamily.</text>
</comment>
<reference key="1">
    <citation type="journal article" date="2006" name="J. Bacteriol.">
        <title>Whole-genome sequence of Listeria welshimeri reveals common steps in genome reduction with Listeria innocua as compared to Listeria monocytogenes.</title>
        <authorList>
            <person name="Hain T."/>
            <person name="Steinweg C."/>
            <person name="Kuenne C.T."/>
            <person name="Billion A."/>
            <person name="Ghai R."/>
            <person name="Chatterjee S.S."/>
            <person name="Domann E."/>
            <person name="Kaerst U."/>
            <person name="Goesmann A."/>
            <person name="Bekel T."/>
            <person name="Bartels D."/>
            <person name="Kaiser O."/>
            <person name="Meyer F."/>
            <person name="Puehler A."/>
            <person name="Weisshaar B."/>
            <person name="Wehland J."/>
            <person name="Liang C."/>
            <person name="Dandekar T."/>
            <person name="Lampidis R."/>
            <person name="Kreft J."/>
            <person name="Goebel W."/>
            <person name="Chakraborty T."/>
        </authorList>
    </citation>
    <scope>NUCLEOTIDE SEQUENCE [LARGE SCALE GENOMIC DNA]</scope>
    <source>
        <strain>ATCC 35897 / DSM 20650 / CCUG 15529 / CIP 8149 / NCTC 11857 / SLCC 5334 / V8</strain>
    </source>
</reference>
<feature type="chain" id="PRO_1000012633" description="ATP-dependent protease subunit HslV">
    <location>
        <begin position="1"/>
        <end position="179"/>
    </location>
</feature>
<feature type="active site" evidence="1">
    <location>
        <position position="6"/>
    </location>
</feature>
<feature type="binding site" evidence="1">
    <location>
        <position position="164"/>
    </location>
    <ligand>
        <name>Na(+)</name>
        <dbReference type="ChEBI" id="CHEBI:29101"/>
    </ligand>
</feature>
<feature type="binding site" evidence="1">
    <location>
        <position position="167"/>
    </location>
    <ligand>
        <name>Na(+)</name>
        <dbReference type="ChEBI" id="CHEBI:29101"/>
    </ligand>
</feature>
<feature type="binding site" evidence="1">
    <location>
        <position position="170"/>
    </location>
    <ligand>
        <name>Na(+)</name>
        <dbReference type="ChEBI" id="CHEBI:29101"/>
    </ligand>
</feature>
<sequence length="179" mass="19406">MELHATTIFAVQHDGKAAMAGDGQVTLGESVVMKHTAKKVRRLFHDKVIAGFAGSVADAFTLFEKFEAKLNEYNGNLERASVELAQQWRSDSVLRKLEAMLIVMDKDTLLLVSGTGEVIEPDDGILAIGSGGNYALAAGRALKRHNGGQMEAKDIARHALEIASEICVFTNDHITVEEL</sequence>